<sequence length="130" mass="13328">MNPPSTKVPWAAVTLLLLLLLPPALLSPGAAAQPLPDCCRQKTCSCRLYELLHGAGNHAAGILTLGKRRPGPPGLQGRLQRLLQASGNHAAGILTMGRRAGAEPAPRPCPGRRCPVVAVPSAAPGGRSGV</sequence>
<reference key="1">
    <citation type="journal article" date="2001" name="Genome Res.">
        <title>Identification and functional analysis of mutations in the hypocretin (orexin) genes of narcoleptic canines.</title>
        <authorList>
            <person name="Hungs M."/>
            <person name="Fan J."/>
            <person name="Lin L."/>
            <person name="Lin X."/>
            <person name="Maki R.A."/>
            <person name="Mignot E."/>
        </authorList>
    </citation>
    <scope>NUCLEOTIDE SEQUENCE [GENOMIC DNA]</scope>
    <scope>VARIANT THR-30</scope>
</reference>
<reference key="2">
    <citation type="journal article" date="2001" name="Bioessays">
        <title>Hypocretin/orexin, sleep and narcolepsy.</title>
        <authorList>
            <person name="Hungs M."/>
            <person name="Mignot E."/>
        </authorList>
    </citation>
    <scope>REVIEW</scope>
</reference>
<reference key="3">
    <citation type="journal article" date="2001" name="Annu. Rev. Neurosci.">
        <title>To eat or to sleep? Orexin in the regulation of feeding and wakefulness.</title>
        <authorList>
            <person name="Willie J.T."/>
            <person name="Chemelli R.M."/>
            <person name="Sinton C.M."/>
            <person name="Yanagisawa M."/>
        </authorList>
    </citation>
    <scope>REVIEW</scope>
</reference>
<dbReference type="EMBL" id="AF285110">
    <property type="protein sequence ID" value="AAG13965.1"/>
    <property type="molecule type" value="Genomic_DNA"/>
</dbReference>
<dbReference type="RefSeq" id="NP_001029166.1">
    <property type="nucleotide sequence ID" value="NM_001033994.1"/>
</dbReference>
<dbReference type="RefSeq" id="XP_005624415.1">
    <property type="nucleotide sequence ID" value="XM_005624358.1"/>
</dbReference>
<dbReference type="RefSeq" id="XP_038531022.1">
    <property type="nucleotide sequence ID" value="XM_038675094.1"/>
</dbReference>
<dbReference type="FunCoup" id="Q9GLF6">
    <property type="interactions" value="9"/>
</dbReference>
<dbReference type="STRING" id="9615.ENSCAFP00000022949"/>
<dbReference type="PaxDb" id="9612-ENSCAFP00000022949"/>
<dbReference type="Ensembl" id="ENSCAFT00000024739.5">
    <property type="protein sequence ID" value="ENSCAFP00000022949.3"/>
    <property type="gene ID" value="ENSCAFG00000015615.5"/>
</dbReference>
<dbReference type="Ensembl" id="ENSCAFT00030000402.1">
    <property type="protein sequence ID" value="ENSCAFP00030000352.1"/>
    <property type="gene ID" value="ENSCAFG00030000255.1"/>
</dbReference>
<dbReference type="Ensembl" id="ENSCAFT00040016053.1">
    <property type="protein sequence ID" value="ENSCAFP00040013910.1"/>
    <property type="gene ID" value="ENSCAFG00040008609.1"/>
</dbReference>
<dbReference type="Ensembl" id="ENSCAFT00845017785.1">
    <property type="protein sequence ID" value="ENSCAFP00845013852.1"/>
    <property type="gene ID" value="ENSCAFG00845010112.1"/>
</dbReference>
<dbReference type="GeneID" id="607641"/>
<dbReference type="KEGG" id="cfa:607641"/>
<dbReference type="CTD" id="3060"/>
<dbReference type="VEuPathDB" id="HostDB:ENSCAFG00845010112"/>
<dbReference type="VGNC" id="VGNC:41622">
    <property type="gene designation" value="HCRT"/>
</dbReference>
<dbReference type="eggNOG" id="ENOG502S83I">
    <property type="taxonomic scope" value="Eukaryota"/>
</dbReference>
<dbReference type="GeneTree" id="ENSGT00390000014272"/>
<dbReference type="HOGENOM" id="CLU_149027_1_0_1"/>
<dbReference type="InParanoid" id="Q9GLF6"/>
<dbReference type="OMA" id="HPCPGRR"/>
<dbReference type="OrthoDB" id="9379045at2759"/>
<dbReference type="TreeFam" id="TF330756"/>
<dbReference type="Reactome" id="R-CFA-389397">
    <property type="pathway name" value="Orexin and neuropeptides FF and QRFP bind to their respective receptors"/>
</dbReference>
<dbReference type="Reactome" id="R-CFA-416476">
    <property type="pathway name" value="G alpha (q) signalling events"/>
</dbReference>
<dbReference type="Proteomes" id="UP000002254">
    <property type="component" value="Chromosome 9"/>
</dbReference>
<dbReference type="Proteomes" id="UP000694429">
    <property type="component" value="Chromosome 9"/>
</dbReference>
<dbReference type="Proteomes" id="UP000694542">
    <property type="component" value="Chromosome 9"/>
</dbReference>
<dbReference type="Proteomes" id="UP000805418">
    <property type="component" value="Chromosome 9"/>
</dbReference>
<dbReference type="Bgee" id="ENSCAFG00000015615">
    <property type="expression patterns" value="Expressed in smooth muscle tissue and 28 other cell types or tissues"/>
</dbReference>
<dbReference type="GO" id="GO:0031410">
    <property type="term" value="C:cytoplasmic vesicle"/>
    <property type="evidence" value="ECO:0007669"/>
    <property type="project" value="UniProtKB-KW"/>
</dbReference>
<dbReference type="GO" id="GO:0048471">
    <property type="term" value="C:perinuclear region of cytoplasm"/>
    <property type="evidence" value="ECO:0000318"/>
    <property type="project" value="GO_Central"/>
</dbReference>
<dbReference type="GO" id="GO:0005791">
    <property type="term" value="C:rough endoplasmic reticulum"/>
    <property type="evidence" value="ECO:0007669"/>
    <property type="project" value="UniProtKB-SubCell"/>
</dbReference>
<dbReference type="GO" id="GO:0045202">
    <property type="term" value="C:synapse"/>
    <property type="evidence" value="ECO:0007669"/>
    <property type="project" value="UniProtKB-SubCell"/>
</dbReference>
<dbReference type="GO" id="GO:0005184">
    <property type="term" value="F:neuropeptide hormone activity"/>
    <property type="evidence" value="ECO:0000318"/>
    <property type="project" value="GO_Central"/>
</dbReference>
<dbReference type="GO" id="GO:0031771">
    <property type="term" value="F:type 1 orexin receptor binding"/>
    <property type="evidence" value="ECO:0000318"/>
    <property type="project" value="GO_Central"/>
</dbReference>
<dbReference type="GO" id="GO:0031772">
    <property type="term" value="F:type 2 orexin receptor binding"/>
    <property type="evidence" value="ECO:0000318"/>
    <property type="project" value="GO_Central"/>
</dbReference>
<dbReference type="GO" id="GO:0042755">
    <property type="term" value="P:eating behavior"/>
    <property type="evidence" value="ECO:0000318"/>
    <property type="project" value="GO_Central"/>
</dbReference>
<dbReference type="GO" id="GO:0007218">
    <property type="term" value="P:neuropeptide signaling pathway"/>
    <property type="evidence" value="ECO:0007669"/>
    <property type="project" value="UniProtKB-KW"/>
</dbReference>
<dbReference type="GO" id="GO:0120162">
    <property type="term" value="P:positive regulation of cold-induced thermogenesis"/>
    <property type="evidence" value="ECO:0007669"/>
    <property type="project" value="Ensembl"/>
</dbReference>
<dbReference type="GO" id="GO:0051971">
    <property type="term" value="P:positive regulation of transmission of nerve impulse"/>
    <property type="evidence" value="ECO:0000318"/>
    <property type="project" value="GO_Central"/>
</dbReference>
<dbReference type="GO" id="GO:0046928">
    <property type="term" value="P:regulation of neurotransmitter secretion"/>
    <property type="evidence" value="ECO:0000318"/>
    <property type="project" value="GO_Central"/>
</dbReference>
<dbReference type="GO" id="GO:0042594">
    <property type="term" value="P:response to starvation"/>
    <property type="evidence" value="ECO:0000318"/>
    <property type="project" value="GO_Central"/>
</dbReference>
<dbReference type="GO" id="GO:0030431">
    <property type="term" value="P:sleep"/>
    <property type="evidence" value="ECO:0000318"/>
    <property type="project" value="GO_Central"/>
</dbReference>
<dbReference type="GO" id="GO:0001659">
    <property type="term" value="P:temperature homeostasis"/>
    <property type="evidence" value="ECO:0000318"/>
    <property type="project" value="GO_Central"/>
</dbReference>
<dbReference type="InterPro" id="IPR001704">
    <property type="entry name" value="Orexin"/>
</dbReference>
<dbReference type="PANTHER" id="PTHR15173:SF2">
    <property type="entry name" value="HYPOCRETIN NEUROPEPTIDE PRECURSOR"/>
    <property type="match status" value="1"/>
</dbReference>
<dbReference type="PANTHER" id="PTHR15173">
    <property type="entry name" value="OREXIN"/>
    <property type="match status" value="1"/>
</dbReference>
<dbReference type="Pfam" id="PF02072">
    <property type="entry name" value="Orexin"/>
    <property type="match status" value="1"/>
</dbReference>
<dbReference type="PIRSF" id="PIRSF037824">
    <property type="entry name" value="Orexin"/>
    <property type="match status" value="1"/>
</dbReference>
<dbReference type="PRINTS" id="PR01091">
    <property type="entry name" value="OREXINPP"/>
</dbReference>
<name>OREX_CANLF</name>
<feature type="signal peptide" evidence="1">
    <location>
        <begin position="1"/>
        <end position="32"/>
    </location>
</feature>
<feature type="peptide" id="PRO_0000020258" description="Orexin-A" evidence="1">
    <location>
        <begin position="33"/>
        <end position="65"/>
    </location>
</feature>
<feature type="peptide" id="PRO_0000020259" description="Orexin-B" evidence="1">
    <location>
        <begin position="69"/>
        <end position="96"/>
    </location>
</feature>
<feature type="propeptide" id="PRO_0000020260" description="Removed in mature form" evidence="1">
    <location>
        <begin position="97"/>
        <end position="130"/>
    </location>
</feature>
<feature type="modified residue" description="Pyrrolidone carboxylic acid" evidence="1">
    <location>
        <position position="33"/>
    </location>
</feature>
<feature type="modified residue" description="Leucine amide" evidence="1">
    <location>
        <position position="65"/>
    </location>
</feature>
<feature type="modified residue" description="Methionine amide" evidence="1">
    <location>
        <position position="96"/>
    </location>
</feature>
<feature type="disulfide bond" evidence="1">
    <location>
        <begin position="38"/>
        <end position="44"/>
    </location>
</feature>
<feature type="disulfide bond" evidence="1">
    <location>
        <begin position="39"/>
        <end position="46"/>
    </location>
</feature>
<feature type="sequence variant" evidence="2">
    <original>A</original>
    <variation>T</variation>
    <location>
        <position position="30"/>
    </location>
</feature>
<organism>
    <name type="scientific">Canis lupus familiaris</name>
    <name type="common">Dog</name>
    <name type="synonym">Canis familiaris</name>
    <dbReference type="NCBI Taxonomy" id="9615"/>
    <lineage>
        <taxon>Eukaryota</taxon>
        <taxon>Metazoa</taxon>
        <taxon>Chordata</taxon>
        <taxon>Craniata</taxon>
        <taxon>Vertebrata</taxon>
        <taxon>Euteleostomi</taxon>
        <taxon>Mammalia</taxon>
        <taxon>Eutheria</taxon>
        <taxon>Laurasiatheria</taxon>
        <taxon>Carnivora</taxon>
        <taxon>Caniformia</taxon>
        <taxon>Canidae</taxon>
        <taxon>Canis</taxon>
    </lineage>
</organism>
<proteinExistence type="inferred from homology"/>
<evidence type="ECO:0000250" key="1">
    <source>
        <dbReference type="UniProtKB" id="O55232"/>
    </source>
</evidence>
<evidence type="ECO:0000269" key="2">
    <source>
    </source>
</evidence>
<evidence type="ECO:0000305" key="3"/>
<comment type="function">
    <text evidence="1">Neuropeptides that play a significant role in the regulation of food intake and sleep-wakefulness, possibly by coordinating the complex behavioral and physiologic responses of these complementary homeostatic functions. A broader role in the homeostatic regulation of energy metabolism, autonomic function, hormonal balance and the regulation of body fluids, is also suggested.</text>
</comment>
<comment type="function">
    <molecule>Orexin-A</molecule>
    <text evidence="1">Binds to orexin receptors HCRTR1/OX1R and HCRTR2/OX2R with a high affinity (By similarity). Stimulates food intake (By similarity). Modulates pituitary luteinizing hormone secretion in an ovarian steroid-dependent manner (By similarity).</text>
</comment>
<comment type="function">
    <molecule>Orexin-B</molecule>
    <text evidence="1">Binds to orexin receptor HCRTR2/OX2R only (By similarity). Stimulates food intake (By similarity). Modulates pituitary luteinizing hormone secretion in an ovarian steroid-dependent manner (By similarity).</text>
</comment>
<comment type="subcellular location">
    <subcellularLocation>
        <location evidence="1">Rough endoplasmic reticulum</location>
    </subcellularLocation>
    <subcellularLocation>
        <location evidence="1">Cytoplasmic vesicle</location>
    </subcellularLocation>
    <subcellularLocation>
        <location evidence="1">Synapse</location>
    </subcellularLocation>
    <text evidence="1">Associated with perikaryal rough endoplasmic reticulum as well as cytoplasmic large granular vesicles at synapses.</text>
</comment>
<comment type="PTM">
    <text evidence="1">Specific enzymatic cleavages at paired basic residues yield the different active peptides.</text>
</comment>
<comment type="similarity">
    <text evidence="3">Belongs to the orexin family.</text>
</comment>
<comment type="online information" name="Protein Spotlight">
    <link uri="https://www.proteinspotlight.org/back_issues/015"/>
    <text>Qui dort dine - Issue 15 of October 2001</text>
</comment>
<gene>
    <name type="primary">HCRT</name>
    <name type="synonym">OX</name>
    <name type="synonym">PPOX</name>
</gene>
<accession>Q9GLF6</accession>
<protein>
    <recommendedName>
        <fullName evidence="1">Hypocretin neuropeptide precursor</fullName>
    </recommendedName>
    <alternativeName>
        <fullName evidence="1">Hypocretin</fullName>
        <shortName evidence="1">Hcrt</shortName>
    </alternativeName>
    <alternativeName>
        <fullName evidence="1">Orexin precursor</fullName>
    </alternativeName>
    <alternativeName>
        <fullName evidence="1">Prepro-orexin</fullName>
    </alternativeName>
    <alternativeName>
        <fullName evidence="1">Preprohypocretin</fullName>
    </alternativeName>
    <component>
        <recommendedName>
            <fullName evidence="1">Orexin-A</fullName>
        </recommendedName>
        <alternativeName>
            <fullName evidence="1">Hypocretin-1</fullName>
            <shortName evidence="3">Hcrt1</shortName>
        </alternativeName>
    </component>
    <component>
        <recommendedName>
            <fullName evidence="1">Orexin-B</fullName>
        </recommendedName>
        <alternativeName>
            <fullName evidence="1">Hypocretin-2</fullName>
            <shortName evidence="3">Hcrt2</shortName>
        </alternativeName>
    </component>
</protein>
<keyword id="KW-0027">Amidation</keyword>
<keyword id="KW-0165">Cleavage on pair of basic residues</keyword>
<keyword id="KW-0968">Cytoplasmic vesicle</keyword>
<keyword id="KW-1015">Disulfide bond</keyword>
<keyword id="KW-0256">Endoplasmic reticulum</keyword>
<keyword id="KW-0527">Neuropeptide</keyword>
<keyword id="KW-0873">Pyrrolidone carboxylic acid</keyword>
<keyword id="KW-1185">Reference proteome</keyword>
<keyword id="KW-0732">Signal</keyword>
<keyword id="KW-0770">Synapse</keyword>